<organism>
    <name type="scientific">Arabidopsis thaliana</name>
    <name type="common">Mouse-ear cress</name>
    <dbReference type="NCBI Taxonomy" id="3702"/>
    <lineage>
        <taxon>Eukaryota</taxon>
        <taxon>Viridiplantae</taxon>
        <taxon>Streptophyta</taxon>
        <taxon>Embryophyta</taxon>
        <taxon>Tracheophyta</taxon>
        <taxon>Spermatophyta</taxon>
        <taxon>Magnoliopsida</taxon>
        <taxon>eudicotyledons</taxon>
        <taxon>Gunneridae</taxon>
        <taxon>Pentapetalae</taxon>
        <taxon>rosids</taxon>
        <taxon>malvids</taxon>
        <taxon>Brassicales</taxon>
        <taxon>Brassicaceae</taxon>
        <taxon>Camelineae</taxon>
        <taxon>Arabidopsis</taxon>
    </lineage>
</organism>
<proteinExistence type="evidence at transcript level"/>
<sequence>MAGGGLALDVSSAGNIDAKITAAVVMSCIVAASCGLIFGYDIGISGGVTTMKPFLEKFFPSVLKKASEAKTNVYCVYDSQLLTAFTSSLYVAGLVASLVASRLTAAYGRRTTMILGGFTFLFGALINGLAANIAMLISGRILLGFGVGFTNQAAPVYLSEVAPPRWRGAFNIGFSCFISMGVVAANLINYGTDSHRNGWRISLGLAAVPAAIMTVGCLFISDTPSSLLARGKHDEAHTSLLKLRGVENIADVETELAELVRSSQLAIEARAELFMKTILQRRYRPHLVVAVVIPCFQQLTGITVNAFYAPVLFRSVGFGSGPALIATFILGFVNLGSLLLSTMVIDRFGRRFLFIAGGILMLLCQIAVAVLLAVTVGATGDGEMKKGYAVTVVVLLCIYAAGFGWSWGPLSWLVPSEIFPLKIRPAGQSLSVAVNFAATFALSQTFLATLCDFKYGAFLFYGGWIFTMTIFVIMFLPETKGIPVDSMYQVWEKHWYWQRFTKPTST</sequence>
<dbReference type="EMBL" id="AJ344335">
    <property type="protein sequence ID" value="CAC69071.2"/>
    <property type="molecule type" value="mRNA"/>
</dbReference>
<dbReference type="EMBL" id="AC023279">
    <property type="protein sequence ID" value="AAF79273.1"/>
    <property type="status" value="ALT_SEQ"/>
    <property type="molecule type" value="Genomic_DNA"/>
</dbReference>
<dbReference type="EMBL" id="CP002684">
    <property type="protein sequence ID" value="AEE31728.1"/>
    <property type="molecule type" value="Genomic_DNA"/>
</dbReference>
<dbReference type="EMBL" id="AK118511">
    <property type="protein sequence ID" value="BAC43115.1"/>
    <property type="molecule type" value="mRNA"/>
</dbReference>
<dbReference type="EMBL" id="BT005898">
    <property type="protein sequence ID" value="AAO64833.1"/>
    <property type="molecule type" value="mRNA"/>
</dbReference>
<dbReference type="PIR" id="F86469">
    <property type="entry name" value="F86469"/>
</dbReference>
<dbReference type="RefSeq" id="NP_174718.1">
    <property type="nucleotide sequence ID" value="NM_103182.3"/>
</dbReference>
<dbReference type="SMR" id="Q93Y91"/>
<dbReference type="FunCoup" id="Q93Y91">
    <property type="interactions" value="166"/>
</dbReference>
<dbReference type="STRING" id="3702.Q93Y91"/>
<dbReference type="GlyGen" id="Q93Y91">
    <property type="glycosylation" value="1 site"/>
</dbReference>
<dbReference type="PaxDb" id="3702-AT1G34580.1"/>
<dbReference type="ProteomicsDB" id="228429"/>
<dbReference type="EnsemblPlants" id="AT1G34580.1">
    <property type="protein sequence ID" value="AT1G34580.1"/>
    <property type="gene ID" value="AT1G34580"/>
</dbReference>
<dbReference type="GeneID" id="840362"/>
<dbReference type="Gramene" id="AT1G34580.1">
    <property type="protein sequence ID" value="AT1G34580.1"/>
    <property type="gene ID" value="AT1G34580"/>
</dbReference>
<dbReference type="KEGG" id="ath:AT1G34580"/>
<dbReference type="Araport" id="AT1G34580"/>
<dbReference type="TAIR" id="AT1G34580"/>
<dbReference type="eggNOG" id="KOG0254">
    <property type="taxonomic scope" value="Eukaryota"/>
</dbReference>
<dbReference type="HOGENOM" id="CLU_001265_30_5_1"/>
<dbReference type="InParanoid" id="Q93Y91"/>
<dbReference type="OMA" id="FGRKWPW"/>
<dbReference type="PhylomeDB" id="Q93Y91"/>
<dbReference type="PRO" id="PR:Q93Y91"/>
<dbReference type="Proteomes" id="UP000006548">
    <property type="component" value="Chromosome 1"/>
</dbReference>
<dbReference type="ExpressionAtlas" id="Q93Y91">
    <property type="expression patterns" value="baseline and differential"/>
</dbReference>
<dbReference type="GO" id="GO:0016020">
    <property type="term" value="C:membrane"/>
    <property type="evidence" value="ECO:0007669"/>
    <property type="project" value="UniProtKB-SubCell"/>
</dbReference>
<dbReference type="GO" id="GO:0015145">
    <property type="term" value="F:monosaccharide transmembrane transporter activity"/>
    <property type="evidence" value="ECO:0007669"/>
    <property type="project" value="InterPro"/>
</dbReference>
<dbReference type="GO" id="GO:0015293">
    <property type="term" value="F:symporter activity"/>
    <property type="evidence" value="ECO:0007669"/>
    <property type="project" value="UniProtKB-KW"/>
</dbReference>
<dbReference type="CDD" id="cd17361">
    <property type="entry name" value="MFS_STP"/>
    <property type="match status" value="1"/>
</dbReference>
<dbReference type="FunFam" id="1.20.1250.20:FF:000002">
    <property type="entry name" value="Sugar transport protein 13"/>
    <property type="match status" value="1"/>
</dbReference>
<dbReference type="Gene3D" id="1.20.1250.20">
    <property type="entry name" value="MFS general substrate transporter like domains"/>
    <property type="match status" value="1"/>
</dbReference>
<dbReference type="InterPro" id="IPR020846">
    <property type="entry name" value="MFS_dom"/>
</dbReference>
<dbReference type="InterPro" id="IPR044778">
    <property type="entry name" value="MFS_STP/MST-like_plant"/>
</dbReference>
<dbReference type="InterPro" id="IPR005828">
    <property type="entry name" value="MFS_sugar_transport-like"/>
</dbReference>
<dbReference type="InterPro" id="IPR036259">
    <property type="entry name" value="MFS_trans_sf"/>
</dbReference>
<dbReference type="InterPro" id="IPR045262">
    <property type="entry name" value="STP/PLT_plant"/>
</dbReference>
<dbReference type="InterPro" id="IPR003663">
    <property type="entry name" value="Sugar/inositol_transpt"/>
</dbReference>
<dbReference type="InterPro" id="IPR005829">
    <property type="entry name" value="Sugar_transporter_CS"/>
</dbReference>
<dbReference type="NCBIfam" id="TIGR00879">
    <property type="entry name" value="SP"/>
    <property type="match status" value="1"/>
</dbReference>
<dbReference type="PANTHER" id="PTHR23500">
    <property type="entry name" value="SOLUTE CARRIER FAMILY 2, FACILITATED GLUCOSE TRANSPORTER"/>
    <property type="match status" value="1"/>
</dbReference>
<dbReference type="PANTHER" id="PTHR23500:SF44">
    <property type="entry name" value="SUGAR TRANSPORT PROTEIN 5"/>
    <property type="match status" value="1"/>
</dbReference>
<dbReference type="Pfam" id="PF00083">
    <property type="entry name" value="Sugar_tr"/>
    <property type="match status" value="1"/>
</dbReference>
<dbReference type="PRINTS" id="PR00171">
    <property type="entry name" value="SUGRTRNSPORT"/>
</dbReference>
<dbReference type="SUPFAM" id="SSF103473">
    <property type="entry name" value="MFS general substrate transporter"/>
    <property type="match status" value="1"/>
</dbReference>
<dbReference type="PROSITE" id="PS50850">
    <property type="entry name" value="MFS"/>
    <property type="match status" value="1"/>
</dbReference>
<dbReference type="PROSITE" id="PS00217">
    <property type="entry name" value="SUGAR_TRANSPORT_2"/>
    <property type="match status" value="1"/>
</dbReference>
<accession>Q93Y91</accession>
<accession>Q9LNM0</accession>
<gene>
    <name type="primary">STP5</name>
    <name type="ordered locus">At1g34580</name>
    <name type="ORF">F12K21.8</name>
</gene>
<evidence type="ECO:0000250" key="1"/>
<evidence type="ECO:0000255" key="2"/>
<evidence type="ECO:0000305" key="3"/>
<feature type="chain" id="PRO_0000050435" description="Sugar transport protein 5">
    <location>
        <begin position="1"/>
        <end position="506"/>
    </location>
</feature>
<feature type="topological domain" description="Cytoplasmic" evidence="2">
    <location>
        <begin position="1"/>
        <end position="19"/>
    </location>
</feature>
<feature type="transmembrane region" description="Helical; Name=1" evidence="2">
    <location>
        <begin position="20"/>
        <end position="40"/>
    </location>
</feature>
<feature type="transmembrane region" description="Helical; Name=2" evidence="2">
    <location>
        <begin position="81"/>
        <end position="101"/>
    </location>
</feature>
<feature type="transmembrane region" description="Helical; Name=3" evidence="2">
    <location>
        <begin position="117"/>
        <end position="137"/>
    </location>
</feature>
<feature type="transmembrane region" description="Helical; Name=4" evidence="2">
    <location>
        <begin position="141"/>
        <end position="161"/>
    </location>
</feature>
<feature type="transmembrane region" description="Helical; Name=5" evidence="2">
    <location>
        <begin position="168"/>
        <end position="188"/>
    </location>
</feature>
<feature type="transmembrane region" description="Helical; Name=6" evidence="2">
    <location>
        <begin position="201"/>
        <end position="221"/>
    </location>
</feature>
<feature type="transmembrane region" description="Helical; Name=7" evidence="2">
    <location>
        <begin position="287"/>
        <end position="307"/>
    </location>
</feature>
<feature type="transmembrane region" description="Helical; Name=8" evidence="2">
    <location>
        <begin position="325"/>
        <end position="345"/>
    </location>
</feature>
<feature type="transmembrane region" description="Helical; Name=9" evidence="2">
    <location>
        <begin position="352"/>
        <end position="372"/>
    </location>
</feature>
<feature type="transmembrane region" description="Helical; Name=10" evidence="2">
    <location>
        <begin position="390"/>
        <end position="410"/>
    </location>
</feature>
<feature type="transmembrane region" description="Helical; Name=11" evidence="2">
    <location>
        <begin position="430"/>
        <end position="450"/>
    </location>
</feature>
<feature type="transmembrane region" description="Helical; Name=12" evidence="2">
    <location>
        <begin position="456"/>
        <end position="476"/>
    </location>
</feature>
<feature type="topological domain" description="Cytoplasmic" evidence="2">
    <location>
        <begin position="477"/>
        <end position="506"/>
    </location>
</feature>
<protein>
    <recommendedName>
        <fullName>Sugar transport protein 5</fullName>
    </recommendedName>
    <alternativeName>
        <fullName>Hexose transporter 5</fullName>
    </alternativeName>
</protein>
<name>STP5_ARATH</name>
<reference key="1">
    <citation type="submission" date="2001-09" db="EMBL/GenBank/DDBJ databases">
        <title>STP5, a new Arabidopsis monosaccharide transporter.</title>
        <authorList>
            <person name="Buettner M."/>
        </authorList>
    </citation>
    <scope>NUCLEOTIDE SEQUENCE [MRNA]</scope>
</reference>
<reference key="2">
    <citation type="journal article" date="2000" name="Nature">
        <title>Sequence and analysis of chromosome 1 of the plant Arabidopsis thaliana.</title>
        <authorList>
            <person name="Theologis A."/>
            <person name="Ecker J.R."/>
            <person name="Palm C.J."/>
            <person name="Federspiel N.A."/>
            <person name="Kaul S."/>
            <person name="White O."/>
            <person name="Alonso J."/>
            <person name="Altafi H."/>
            <person name="Araujo R."/>
            <person name="Bowman C.L."/>
            <person name="Brooks S.Y."/>
            <person name="Buehler E."/>
            <person name="Chan A."/>
            <person name="Chao Q."/>
            <person name="Chen H."/>
            <person name="Cheuk R.F."/>
            <person name="Chin C.W."/>
            <person name="Chung M.K."/>
            <person name="Conn L."/>
            <person name="Conway A.B."/>
            <person name="Conway A.R."/>
            <person name="Creasy T.H."/>
            <person name="Dewar K."/>
            <person name="Dunn P."/>
            <person name="Etgu P."/>
            <person name="Feldblyum T.V."/>
            <person name="Feng J.-D."/>
            <person name="Fong B."/>
            <person name="Fujii C.Y."/>
            <person name="Gill J.E."/>
            <person name="Goldsmith A.D."/>
            <person name="Haas B."/>
            <person name="Hansen N.F."/>
            <person name="Hughes B."/>
            <person name="Huizar L."/>
            <person name="Hunter J.L."/>
            <person name="Jenkins J."/>
            <person name="Johnson-Hopson C."/>
            <person name="Khan S."/>
            <person name="Khaykin E."/>
            <person name="Kim C.J."/>
            <person name="Koo H.L."/>
            <person name="Kremenetskaia I."/>
            <person name="Kurtz D.B."/>
            <person name="Kwan A."/>
            <person name="Lam B."/>
            <person name="Langin-Hooper S."/>
            <person name="Lee A."/>
            <person name="Lee J.M."/>
            <person name="Lenz C.A."/>
            <person name="Li J.H."/>
            <person name="Li Y.-P."/>
            <person name="Lin X."/>
            <person name="Liu S.X."/>
            <person name="Liu Z.A."/>
            <person name="Luros J.S."/>
            <person name="Maiti R."/>
            <person name="Marziali A."/>
            <person name="Militscher J."/>
            <person name="Miranda M."/>
            <person name="Nguyen M."/>
            <person name="Nierman W.C."/>
            <person name="Osborne B.I."/>
            <person name="Pai G."/>
            <person name="Peterson J."/>
            <person name="Pham P.K."/>
            <person name="Rizzo M."/>
            <person name="Rooney T."/>
            <person name="Rowley D."/>
            <person name="Sakano H."/>
            <person name="Salzberg S.L."/>
            <person name="Schwartz J.R."/>
            <person name="Shinn P."/>
            <person name="Southwick A.M."/>
            <person name="Sun H."/>
            <person name="Tallon L.J."/>
            <person name="Tambunga G."/>
            <person name="Toriumi M.J."/>
            <person name="Town C.D."/>
            <person name="Utterback T."/>
            <person name="Van Aken S."/>
            <person name="Vaysberg M."/>
            <person name="Vysotskaia V.S."/>
            <person name="Walker M."/>
            <person name="Wu D."/>
            <person name="Yu G."/>
            <person name="Fraser C.M."/>
            <person name="Venter J.C."/>
            <person name="Davis R.W."/>
        </authorList>
    </citation>
    <scope>NUCLEOTIDE SEQUENCE [LARGE SCALE GENOMIC DNA]</scope>
    <source>
        <strain>cv. Columbia</strain>
    </source>
</reference>
<reference key="3">
    <citation type="journal article" date="2017" name="Plant J.">
        <title>Araport11: a complete reannotation of the Arabidopsis thaliana reference genome.</title>
        <authorList>
            <person name="Cheng C.Y."/>
            <person name="Krishnakumar V."/>
            <person name="Chan A.P."/>
            <person name="Thibaud-Nissen F."/>
            <person name="Schobel S."/>
            <person name="Town C.D."/>
        </authorList>
    </citation>
    <scope>GENOME REANNOTATION</scope>
    <source>
        <strain>cv. Columbia</strain>
    </source>
</reference>
<reference key="4">
    <citation type="journal article" date="2002" name="Science">
        <title>Functional annotation of a full-length Arabidopsis cDNA collection.</title>
        <authorList>
            <person name="Seki M."/>
            <person name="Narusaka M."/>
            <person name="Kamiya A."/>
            <person name="Ishida J."/>
            <person name="Satou M."/>
            <person name="Sakurai T."/>
            <person name="Nakajima M."/>
            <person name="Enju A."/>
            <person name="Akiyama K."/>
            <person name="Oono Y."/>
            <person name="Muramatsu M."/>
            <person name="Hayashizaki Y."/>
            <person name="Kawai J."/>
            <person name="Carninci P."/>
            <person name="Itoh M."/>
            <person name="Ishii Y."/>
            <person name="Arakawa T."/>
            <person name="Shibata K."/>
            <person name="Shinagawa A."/>
            <person name="Shinozaki K."/>
        </authorList>
    </citation>
    <scope>NUCLEOTIDE SEQUENCE [LARGE SCALE MRNA]</scope>
    <source>
        <strain>cv. Columbia</strain>
    </source>
</reference>
<reference key="5">
    <citation type="journal article" date="2003" name="Science">
        <title>Empirical analysis of transcriptional activity in the Arabidopsis genome.</title>
        <authorList>
            <person name="Yamada K."/>
            <person name="Lim J."/>
            <person name="Dale J.M."/>
            <person name="Chen H."/>
            <person name="Shinn P."/>
            <person name="Palm C.J."/>
            <person name="Southwick A.M."/>
            <person name="Wu H.C."/>
            <person name="Kim C.J."/>
            <person name="Nguyen M."/>
            <person name="Pham P.K."/>
            <person name="Cheuk R.F."/>
            <person name="Karlin-Newmann G."/>
            <person name="Liu S.X."/>
            <person name="Lam B."/>
            <person name="Sakano H."/>
            <person name="Wu T."/>
            <person name="Yu G."/>
            <person name="Miranda M."/>
            <person name="Quach H.L."/>
            <person name="Tripp M."/>
            <person name="Chang C.H."/>
            <person name="Lee J.M."/>
            <person name="Toriumi M.J."/>
            <person name="Chan M.M."/>
            <person name="Tang C.C."/>
            <person name="Onodera C.S."/>
            <person name="Deng J.M."/>
            <person name="Akiyama K."/>
            <person name="Ansari Y."/>
            <person name="Arakawa T."/>
            <person name="Banh J."/>
            <person name="Banno F."/>
            <person name="Bowser L."/>
            <person name="Brooks S.Y."/>
            <person name="Carninci P."/>
            <person name="Chao Q."/>
            <person name="Choy N."/>
            <person name="Enju A."/>
            <person name="Goldsmith A.D."/>
            <person name="Gurjal M."/>
            <person name="Hansen N.F."/>
            <person name="Hayashizaki Y."/>
            <person name="Johnson-Hopson C."/>
            <person name="Hsuan V.W."/>
            <person name="Iida K."/>
            <person name="Karnes M."/>
            <person name="Khan S."/>
            <person name="Koesema E."/>
            <person name="Ishida J."/>
            <person name="Jiang P.X."/>
            <person name="Jones T."/>
            <person name="Kawai J."/>
            <person name="Kamiya A."/>
            <person name="Meyers C."/>
            <person name="Nakajima M."/>
            <person name="Narusaka M."/>
            <person name="Seki M."/>
            <person name="Sakurai T."/>
            <person name="Satou M."/>
            <person name="Tamse R."/>
            <person name="Vaysberg M."/>
            <person name="Wallender E.K."/>
            <person name="Wong C."/>
            <person name="Yamamura Y."/>
            <person name="Yuan S."/>
            <person name="Shinozaki K."/>
            <person name="Davis R.W."/>
            <person name="Theologis A."/>
            <person name="Ecker J.R."/>
        </authorList>
    </citation>
    <scope>NUCLEOTIDE SEQUENCE [LARGE SCALE MRNA]</scope>
    <source>
        <strain>cv. Columbia</strain>
    </source>
</reference>
<reference key="6">
    <citation type="journal article" date="2006" name="BMC Evol. Biol.">
        <title>The monosaccharide transporter gene family in land plants is ancient and shows differential subfamily expression and expansion across lineages.</title>
        <authorList>
            <person name="Johnson D.A."/>
            <person name="Hill J.P."/>
            <person name="Thomas M.A."/>
        </authorList>
    </citation>
    <scope>GENE FAMILY</scope>
</reference>
<comment type="function">
    <text evidence="1">Mediates an active uptake of hexoses, probably by sugar/hydrogen symport.</text>
</comment>
<comment type="subcellular location">
    <subcellularLocation>
        <location>Membrane</location>
        <topology>Multi-pass membrane protein</topology>
    </subcellularLocation>
</comment>
<comment type="similarity">
    <text evidence="3">Belongs to the major facilitator superfamily. Sugar transporter (TC 2.A.1.1) family.</text>
</comment>
<comment type="sequence caution" evidence="3">
    <conflict type="erroneous gene model prediction">
        <sequence resource="EMBL-CDS" id="AAF79273"/>
    </conflict>
</comment>
<keyword id="KW-0472">Membrane</keyword>
<keyword id="KW-1185">Reference proteome</keyword>
<keyword id="KW-0762">Sugar transport</keyword>
<keyword id="KW-0769">Symport</keyword>
<keyword id="KW-0812">Transmembrane</keyword>
<keyword id="KW-1133">Transmembrane helix</keyword>
<keyword id="KW-0813">Transport</keyword>